<keyword id="KW-0067">ATP-binding</keyword>
<keyword id="KW-0113">Calvin cycle</keyword>
<keyword id="KW-0418">Kinase</keyword>
<keyword id="KW-0547">Nucleotide-binding</keyword>
<keyword id="KW-0602">Photosynthesis</keyword>
<keyword id="KW-1185">Reference proteome</keyword>
<keyword id="KW-0808">Transferase</keyword>
<evidence type="ECO:0000269" key="1">
    <source>
    </source>
</evidence>
<evidence type="ECO:0000305" key="2"/>
<reference key="1">
    <citation type="journal article" date="1991" name="J. Biol. Chem.">
        <title>A residue substitution in phosphoribulokinase of Synechocystis PCC 6803 renders the mutant light-sensitive.</title>
        <authorList>
            <person name="Su X."/>
            <person name="Bogorad L."/>
        </authorList>
    </citation>
    <scope>NUCLEOTIDE SEQUENCE [GENOMIC DNA]</scope>
</reference>
<reference key="2">
    <citation type="journal article" date="1996" name="DNA Res.">
        <title>Sequence analysis of the genome of the unicellular cyanobacterium Synechocystis sp. strain PCC6803. II. Sequence determination of the entire genome and assignment of potential protein-coding regions.</title>
        <authorList>
            <person name="Kaneko T."/>
            <person name="Sato S."/>
            <person name="Kotani H."/>
            <person name="Tanaka A."/>
            <person name="Asamizu E."/>
            <person name="Nakamura Y."/>
            <person name="Miyajima N."/>
            <person name="Hirosawa M."/>
            <person name="Sugiura M."/>
            <person name="Sasamoto S."/>
            <person name="Kimura T."/>
            <person name="Hosouchi T."/>
            <person name="Matsuno A."/>
            <person name="Muraki A."/>
            <person name="Nakazaki N."/>
            <person name="Naruo K."/>
            <person name="Okumura S."/>
            <person name="Shimpo S."/>
            <person name="Takeuchi C."/>
            <person name="Wada T."/>
            <person name="Watanabe A."/>
            <person name="Yamada M."/>
            <person name="Yasuda M."/>
            <person name="Tabata S."/>
        </authorList>
    </citation>
    <scope>NUCLEOTIDE SEQUENCE [LARGE SCALE GENOMIC DNA]</scope>
    <source>
        <strain>ATCC 27184 / PCC 6803 / Kazusa</strain>
    </source>
</reference>
<reference key="3">
    <citation type="journal article" date="1998" name="Plant Mol. Biol.">
        <title>Characterization and transcriptional regulation of the Synechocystis PCC 6803 petH gene, encoding ferredoxin-NADP+ oxidoreductase: involvement of a novel type of divergent operator.</title>
        <authorList>
            <person name="van Thor J.J."/>
            <person name="Hellingwerf K.J."/>
            <person name="Matthijs H.C.P."/>
        </authorList>
    </citation>
    <scope>INDUCTION</scope>
</reference>
<proteinExistence type="evidence at transcript level"/>
<dbReference type="EC" id="2.7.1.19"/>
<dbReference type="EMBL" id="M77134">
    <property type="protein sequence ID" value="AAA27293.1"/>
    <property type="molecule type" value="Genomic_DNA"/>
</dbReference>
<dbReference type="EMBL" id="BA000022">
    <property type="protein sequence ID" value="BAA18458.1"/>
    <property type="molecule type" value="Genomic_DNA"/>
</dbReference>
<dbReference type="PIR" id="JC1336">
    <property type="entry name" value="JC1336"/>
</dbReference>
<dbReference type="SMR" id="P37101"/>
<dbReference type="FunCoup" id="P37101">
    <property type="interactions" value="244"/>
</dbReference>
<dbReference type="IntAct" id="P37101">
    <property type="interactions" value="6"/>
</dbReference>
<dbReference type="STRING" id="1148.gene:10499335"/>
<dbReference type="PaxDb" id="1148-1653545"/>
<dbReference type="EnsemblBacteria" id="BAA18458">
    <property type="protein sequence ID" value="BAA18458"/>
    <property type="gene ID" value="BAA18458"/>
</dbReference>
<dbReference type="KEGG" id="syn:sll1525"/>
<dbReference type="eggNOG" id="COG0572">
    <property type="taxonomic scope" value="Bacteria"/>
</dbReference>
<dbReference type="InParanoid" id="P37101"/>
<dbReference type="PhylomeDB" id="P37101"/>
<dbReference type="UniPathway" id="UPA00116"/>
<dbReference type="Proteomes" id="UP000001425">
    <property type="component" value="Chromosome"/>
</dbReference>
<dbReference type="GO" id="GO:0005737">
    <property type="term" value="C:cytoplasm"/>
    <property type="evidence" value="ECO:0000318"/>
    <property type="project" value="GO_Central"/>
</dbReference>
<dbReference type="GO" id="GO:0005524">
    <property type="term" value="F:ATP binding"/>
    <property type="evidence" value="ECO:0007669"/>
    <property type="project" value="UniProtKB-KW"/>
</dbReference>
<dbReference type="GO" id="GO:0008974">
    <property type="term" value="F:phosphoribulokinase activity"/>
    <property type="evidence" value="ECO:0007669"/>
    <property type="project" value="UniProtKB-EC"/>
</dbReference>
<dbReference type="GO" id="GO:0019253">
    <property type="term" value="P:reductive pentose-phosphate cycle"/>
    <property type="evidence" value="ECO:0007669"/>
    <property type="project" value="UniProtKB-UniPathway"/>
</dbReference>
<dbReference type="CDD" id="cd02026">
    <property type="entry name" value="PRK"/>
    <property type="match status" value="1"/>
</dbReference>
<dbReference type="Gene3D" id="3.40.50.300">
    <property type="entry name" value="P-loop containing nucleotide triphosphate hydrolases"/>
    <property type="match status" value="1"/>
</dbReference>
<dbReference type="InterPro" id="IPR027417">
    <property type="entry name" value="P-loop_NTPase"/>
</dbReference>
<dbReference type="InterPro" id="IPR006082">
    <property type="entry name" value="PRK"/>
</dbReference>
<dbReference type="InterPro" id="IPR006083">
    <property type="entry name" value="PRK/URK"/>
</dbReference>
<dbReference type="NCBIfam" id="NF005655">
    <property type="entry name" value="PRK07429.1"/>
    <property type="match status" value="1"/>
</dbReference>
<dbReference type="PANTHER" id="PTHR10285">
    <property type="entry name" value="URIDINE KINASE"/>
    <property type="match status" value="1"/>
</dbReference>
<dbReference type="Pfam" id="PF00485">
    <property type="entry name" value="PRK"/>
    <property type="match status" value="1"/>
</dbReference>
<dbReference type="PRINTS" id="PR00478">
    <property type="entry name" value="PHRIBLKINASE"/>
</dbReference>
<dbReference type="SUPFAM" id="SSF52540">
    <property type="entry name" value="P-loop containing nucleoside triphosphate hydrolases"/>
    <property type="match status" value="1"/>
</dbReference>
<dbReference type="PROSITE" id="PS00567">
    <property type="entry name" value="PHOSPHORIBULOKINASE"/>
    <property type="match status" value="1"/>
</dbReference>
<feature type="chain" id="PRO_0000201959" description="Phosphoribulokinase">
    <location>
        <begin position="1"/>
        <end position="332"/>
    </location>
</feature>
<feature type="sequence variant" description="In a light-sensitive mutant with reduced activity.">
    <original>S</original>
    <variation>Y</variation>
    <location>
        <position position="222"/>
    </location>
</feature>
<feature type="sequence conflict" description="In Ref. 2; BAA18458." evidence="2" ref="2">
    <original>K</original>
    <variation>E</variation>
    <location>
        <position position="317"/>
    </location>
</feature>
<sequence>MTTQLDRVVLIGVAGDSGCGKSTFLRRLTDLFGEEFMTVICLDDYHSLDRQGRKAAGVTALDPRANNFDLMYEQIKTLKSGQSIMKPIYNHETGLLDPPEKVEPNKVVVIEGLHPLYDERVRELVDFGVYLDISEEVKINWKIQRDMAERGHTYEDILASINARKPDFTAYIEPQKQYADVVIQVLPTRLIEDKESKLLRVRLVQKEGVKFFEPAYLFDEGSTIDWRPCGRKLTCTYPGIKMYYGPDNFMGNEVSLLEVDGRFENLEEMVYVENHLSKTGTKYYGEMTELLLKHKDYPGTDNGTGLFQVLVGLKMRKVYEQLTAEAKVPASV</sequence>
<protein>
    <recommendedName>
        <fullName>Phosphoribulokinase</fullName>
        <shortName>PRK</shortName>
        <shortName>PRKase</shortName>
        <ecNumber>2.7.1.19</ecNumber>
    </recommendedName>
    <alternativeName>
        <fullName>Phosphopentokinase</fullName>
    </alternativeName>
</protein>
<organism>
    <name type="scientific">Synechocystis sp. (strain ATCC 27184 / PCC 6803 / Kazusa)</name>
    <dbReference type="NCBI Taxonomy" id="1111708"/>
    <lineage>
        <taxon>Bacteria</taxon>
        <taxon>Bacillati</taxon>
        <taxon>Cyanobacteriota</taxon>
        <taxon>Cyanophyceae</taxon>
        <taxon>Synechococcales</taxon>
        <taxon>Merismopediaceae</taxon>
        <taxon>Synechocystis</taxon>
    </lineage>
</organism>
<accession>P37101</accession>
<accession>P74363</accession>
<comment type="catalytic activity">
    <reaction>
        <text>D-ribulose 5-phosphate + ATP = D-ribulose 1,5-bisphosphate + ADP + H(+)</text>
        <dbReference type="Rhea" id="RHEA:19365"/>
        <dbReference type="ChEBI" id="CHEBI:15378"/>
        <dbReference type="ChEBI" id="CHEBI:30616"/>
        <dbReference type="ChEBI" id="CHEBI:57870"/>
        <dbReference type="ChEBI" id="CHEBI:58121"/>
        <dbReference type="ChEBI" id="CHEBI:456216"/>
        <dbReference type="EC" id="2.7.1.19"/>
    </reaction>
</comment>
<comment type="pathway">
    <text>Carbohydrate biosynthesis; Calvin cycle.</text>
</comment>
<comment type="induction">
    <text evidence="1">By light.</text>
</comment>
<comment type="similarity">
    <text evidence="2">Belongs to the phosphoribulokinase family.</text>
</comment>
<name>KPPR_SYNY3</name>
<gene>
    <name type="primary">prk</name>
    <name type="synonym">ptk</name>
    <name type="ordered locus">sll1525</name>
</gene>